<comment type="function">
    <text evidence="1">Usually encoded in the trnK tRNA gene intron. Probably assists in splicing its own and other chloroplast group II introns.</text>
</comment>
<comment type="subcellular location">
    <subcellularLocation>
        <location>Plastid</location>
        <location>Chloroplast</location>
    </subcellularLocation>
</comment>
<comment type="similarity">
    <text evidence="1">Belongs to the intron maturase 2 family. MatK subfamily.</text>
</comment>
<geneLocation type="chloroplast"/>
<name>MATK_MELAL</name>
<gene>
    <name evidence="1" type="primary">matK</name>
</gene>
<feature type="chain" id="PRO_0000143513" description="Maturase K">
    <location>
        <begin position="1"/>
        <end position="511"/>
    </location>
</feature>
<proteinExistence type="inferred from homology"/>
<protein>
    <recommendedName>
        <fullName evidence="1">Maturase K</fullName>
    </recommendedName>
    <alternativeName>
        <fullName evidence="1">Intron maturase</fullName>
    </alternativeName>
</protein>
<accession>Q9MUZ2</accession>
<dbReference type="EMBL" id="AF164399">
    <property type="protein sequence ID" value="AAF66186.1"/>
    <property type="molecule type" value="Genomic_DNA"/>
</dbReference>
<dbReference type="GO" id="GO:0009507">
    <property type="term" value="C:chloroplast"/>
    <property type="evidence" value="ECO:0007669"/>
    <property type="project" value="UniProtKB-SubCell"/>
</dbReference>
<dbReference type="GO" id="GO:0003723">
    <property type="term" value="F:RNA binding"/>
    <property type="evidence" value="ECO:0007669"/>
    <property type="project" value="UniProtKB-KW"/>
</dbReference>
<dbReference type="GO" id="GO:0006397">
    <property type="term" value="P:mRNA processing"/>
    <property type="evidence" value="ECO:0007669"/>
    <property type="project" value="UniProtKB-KW"/>
</dbReference>
<dbReference type="GO" id="GO:0008380">
    <property type="term" value="P:RNA splicing"/>
    <property type="evidence" value="ECO:0007669"/>
    <property type="project" value="UniProtKB-UniRule"/>
</dbReference>
<dbReference type="GO" id="GO:0008033">
    <property type="term" value="P:tRNA processing"/>
    <property type="evidence" value="ECO:0007669"/>
    <property type="project" value="UniProtKB-KW"/>
</dbReference>
<dbReference type="HAMAP" id="MF_01390">
    <property type="entry name" value="MatK"/>
    <property type="match status" value="1"/>
</dbReference>
<dbReference type="InterPro" id="IPR024937">
    <property type="entry name" value="Domain_X"/>
</dbReference>
<dbReference type="InterPro" id="IPR002866">
    <property type="entry name" value="Maturase_MatK"/>
</dbReference>
<dbReference type="InterPro" id="IPR024942">
    <property type="entry name" value="Maturase_MatK_N"/>
</dbReference>
<dbReference type="PANTHER" id="PTHR34811">
    <property type="entry name" value="MATURASE K"/>
    <property type="match status" value="1"/>
</dbReference>
<dbReference type="PANTHER" id="PTHR34811:SF1">
    <property type="entry name" value="MATURASE K"/>
    <property type="match status" value="1"/>
</dbReference>
<dbReference type="Pfam" id="PF01348">
    <property type="entry name" value="Intron_maturas2"/>
    <property type="match status" value="1"/>
</dbReference>
<dbReference type="Pfam" id="PF01824">
    <property type="entry name" value="MatK_N"/>
    <property type="match status" value="1"/>
</dbReference>
<organism>
    <name type="scientific">Melica altissima</name>
    <name type="common">Siberian melic grass</name>
    <dbReference type="NCBI Taxonomy" id="29685"/>
    <lineage>
        <taxon>Eukaryota</taxon>
        <taxon>Viridiplantae</taxon>
        <taxon>Streptophyta</taxon>
        <taxon>Embryophyta</taxon>
        <taxon>Tracheophyta</taxon>
        <taxon>Spermatophyta</taxon>
        <taxon>Magnoliopsida</taxon>
        <taxon>Liliopsida</taxon>
        <taxon>Poales</taxon>
        <taxon>Poaceae</taxon>
        <taxon>BOP clade</taxon>
        <taxon>Pooideae</taxon>
        <taxon>Melicodae</taxon>
        <taxon>Meliceae</taxon>
        <taxon>Melica</taxon>
    </lineage>
</organism>
<evidence type="ECO:0000255" key="1">
    <source>
        <dbReference type="HAMAP-Rule" id="MF_01390"/>
    </source>
</evidence>
<keyword id="KW-0150">Chloroplast</keyword>
<keyword id="KW-0507">mRNA processing</keyword>
<keyword id="KW-0934">Plastid</keyword>
<keyword id="KW-0694">RNA-binding</keyword>
<keyword id="KW-0819">tRNA processing</keyword>
<sequence length="511" mass="61456">MEKFEGYSEKHKSRQQYFVYPLLFQEYIYAFAHDYGLKGSEPVEIVSCNNKKFSSLLVKRLIIRMYQQNFWINSVNHSNQDRLLDYKNYFYSEFYSQILSEGFAIVAEIPFSLRELSCPKEKEIPKFQNLRSIHSIFPFLEDKFLHLDYLSHIEIPYPIHLEILVQLLQYRIQDVPSLHLLRFFLNYYSNWNSLIASMKSIFLLKKENKRLFRFLYNSYVSEYEFFLLFLRKQSSFLPLASSGTFLERIHFSRKMEHFGVMYPGFFRKTLWFFMDSLMHYVRYQGKAILASKGTFFLKKKWKCYFVYFWQYSFSFWTQPRRIHLNQLANSCFDFLGYLSSVPKSTLLVRNQMLENSFLIDTRMKKFDTIVPAIPLIASLSKAQFCTRLGHPISKPIWTDLLDWDILDRFGRICRNLFHYHSGSSKKQTLYRLKYILRLSCARTLARKHKSTVRTFMLRLGSVFLEEFFTEEEQVFSLMFTKTTFFSFRGSHSERIWYLDIICINDLVNPLN</sequence>
<reference key="1">
    <citation type="journal article" date="1999" name="Ann. Mo. Bot. Gard.">
        <title>Phylogeny of Poaceae inferred from matK sequences.</title>
        <authorList>
            <person name="Hilu K.W."/>
            <person name="Alice L.A."/>
            <person name="Liang H."/>
        </authorList>
    </citation>
    <scope>NUCLEOTIDE SEQUENCE [GENOMIC DNA]</scope>
</reference>